<keyword id="KW-0312">Gluconeogenesis</keyword>
<keyword id="KW-0324">Glycolysis</keyword>
<keyword id="KW-0413">Isomerase</keyword>
<keyword id="KW-1185">Reference proteome</keyword>
<comment type="function">
    <text evidence="1">Catalyzes the interconversion of 2-phosphoglycerate and 3-phosphoglycerate.</text>
</comment>
<comment type="catalytic activity">
    <reaction evidence="1">
        <text>(2R)-2-phosphoglycerate = (2R)-3-phosphoglycerate</text>
        <dbReference type="Rhea" id="RHEA:15901"/>
        <dbReference type="ChEBI" id="CHEBI:58272"/>
        <dbReference type="ChEBI" id="CHEBI:58289"/>
        <dbReference type="EC" id="5.4.2.11"/>
    </reaction>
</comment>
<comment type="pathway">
    <text evidence="1">Carbohydrate degradation; glycolysis; pyruvate from D-glyceraldehyde 3-phosphate: step 3/5.</text>
</comment>
<comment type="subunit">
    <text evidence="1">Homodimer.</text>
</comment>
<comment type="similarity">
    <text evidence="1">Belongs to the phosphoglycerate mutase family. BPG-dependent PGAM subfamily.</text>
</comment>
<accession>Q7VR80</accession>
<sequence length="232" mass="27490">MHIIKTVLIRHGESQWNKDNRFTGWIDVDLSNQGYSEAKRAGQLLKKYKFIFDYGYTSVLKRTIHTLWVILDQLNQTWLPIQKVWQLNERHYGALQGLNKNEAIKTYGYDTIQKWRRSFKDIPPKNNKNDLFLGTNDIRYKNIETNTLPNGESLELTANRVIPYWQKYIEPKIYNNNCIIIVAHGNSIRAILKFLNQLDDSEIFNIEIPTGIPLIYEFDNNIKPIRYYYLSE</sequence>
<dbReference type="EC" id="5.4.2.11" evidence="1"/>
<dbReference type="EMBL" id="BX248583">
    <property type="protein sequence ID" value="CAD83409.1"/>
    <property type="molecule type" value="Genomic_DNA"/>
</dbReference>
<dbReference type="SMR" id="Q7VR80"/>
<dbReference type="STRING" id="203907.Bfl342"/>
<dbReference type="KEGG" id="bfl:Bfl342"/>
<dbReference type="eggNOG" id="COG0588">
    <property type="taxonomic scope" value="Bacteria"/>
</dbReference>
<dbReference type="HOGENOM" id="CLU_033323_1_1_6"/>
<dbReference type="OrthoDB" id="9781415at2"/>
<dbReference type="UniPathway" id="UPA00109">
    <property type="reaction ID" value="UER00186"/>
</dbReference>
<dbReference type="Proteomes" id="UP000002192">
    <property type="component" value="Chromosome"/>
</dbReference>
<dbReference type="GO" id="GO:0004619">
    <property type="term" value="F:phosphoglycerate mutase activity"/>
    <property type="evidence" value="ECO:0007669"/>
    <property type="project" value="UniProtKB-EC"/>
</dbReference>
<dbReference type="GO" id="GO:0006094">
    <property type="term" value="P:gluconeogenesis"/>
    <property type="evidence" value="ECO:0007669"/>
    <property type="project" value="UniProtKB-UniRule"/>
</dbReference>
<dbReference type="GO" id="GO:0006096">
    <property type="term" value="P:glycolytic process"/>
    <property type="evidence" value="ECO:0007669"/>
    <property type="project" value="UniProtKB-UniRule"/>
</dbReference>
<dbReference type="CDD" id="cd07067">
    <property type="entry name" value="HP_PGM_like"/>
    <property type="match status" value="1"/>
</dbReference>
<dbReference type="FunFam" id="3.40.50.1240:FF:000003">
    <property type="entry name" value="2,3-bisphosphoglycerate-dependent phosphoglycerate mutase"/>
    <property type="match status" value="1"/>
</dbReference>
<dbReference type="Gene3D" id="3.40.50.1240">
    <property type="entry name" value="Phosphoglycerate mutase-like"/>
    <property type="match status" value="1"/>
</dbReference>
<dbReference type="HAMAP" id="MF_01039">
    <property type="entry name" value="PGAM_GpmA"/>
    <property type="match status" value="1"/>
</dbReference>
<dbReference type="InterPro" id="IPR013078">
    <property type="entry name" value="His_Pase_superF_clade-1"/>
</dbReference>
<dbReference type="InterPro" id="IPR029033">
    <property type="entry name" value="His_PPase_superfam"/>
</dbReference>
<dbReference type="InterPro" id="IPR001345">
    <property type="entry name" value="PG/BPGM_mutase_AS"/>
</dbReference>
<dbReference type="InterPro" id="IPR005952">
    <property type="entry name" value="Phosphogly_mut1"/>
</dbReference>
<dbReference type="NCBIfam" id="TIGR01258">
    <property type="entry name" value="pgm_1"/>
    <property type="match status" value="1"/>
</dbReference>
<dbReference type="NCBIfam" id="NF010713">
    <property type="entry name" value="PRK14115.1"/>
    <property type="match status" value="1"/>
</dbReference>
<dbReference type="PANTHER" id="PTHR11931">
    <property type="entry name" value="PHOSPHOGLYCERATE MUTASE"/>
    <property type="match status" value="1"/>
</dbReference>
<dbReference type="Pfam" id="PF00300">
    <property type="entry name" value="His_Phos_1"/>
    <property type="match status" value="2"/>
</dbReference>
<dbReference type="PIRSF" id="PIRSF000709">
    <property type="entry name" value="6PFK_2-Ptase"/>
    <property type="match status" value="1"/>
</dbReference>
<dbReference type="SMART" id="SM00855">
    <property type="entry name" value="PGAM"/>
    <property type="match status" value="1"/>
</dbReference>
<dbReference type="SUPFAM" id="SSF53254">
    <property type="entry name" value="Phosphoglycerate mutase-like"/>
    <property type="match status" value="1"/>
</dbReference>
<dbReference type="PROSITE" id="PS00175">
    <property type="entry name" value="PG_MUTASE"/>
    <property type="match status" value="1"/>
</dbReference>
<gene>
    <name evidence="1" type="primary">gpmA</name>
    <name type="ordered locus">Bfl342</name>
</gene>
<reference key="1">
    <citation type="journal article" date="2003" name="Proc. Natl. Acad. Sci. U.S.A.">
        <title>The genome sequence of Blochmannia floridanus: comparative analysis of reduced genomes.</title>
        <authorList>
            <person name="Gil R."/>
            <person name="Silva F.J."/>
            <person name="Zientz E."/>
            <person name="Delmotte F."/>
            <person name="Gonzalez-Candelas F."/>
            <person name="Latorre A."/>
            <person name="Rausell C."/>
            <person name="Kamerbeek J."/>
            <person name="Gadau J."/>
            <person name="Hoelldobler B."/>
            <person name="van Ham R.C.H.J."/>
            <person name="Gross R."/>
            <person name="Moya A."/>
        </authorList>
    </citation>
    <scope>NUCLEOTIDE SEQUENCE [LARGE SCALE GENOMIC DNA]</scope>
</reference>
<protein>
    <recommendedName>
        <fullName evidence="1">2,3-bisphosphoglycerate-dependent phosphoglycerate mutase</fullName>
        <shortName evidence="1">BPG-dependent PGAM</shortName>
        <shortName evidence="1">PGAM</shortName>
        <shortName evidence="1">Phosphoglyceromutase</shortName>
        <shortName evidence="1">dPGM</shortName>
        <ecNumber evidence="1">5.4.2.11</ecNumber>
    </recommendedName>
</protein>
<evidence type="ECO:0000255" key="1">
    <source>
        <dbReference type="HAMAP-Rule" id="MF_01039"/>
    </source>
</evidence>
<organism>
    <name type="scientific">Blochmanniella floridana</name>
    <dbReference type="NCBI Taxonomy" id="203907"/>
    <lineage>
        <taxon>Bacteria</taxon>
        <taxon>Pseudomonadati</taxon>
        <taxon>Pseudomonadota</taxon>
        <taxon>Gammaproteobacteria</taxon>
        <taxon>Enterobacterales</taxon>
        <taxon>Enterobacteriaceae</taxon>
        <taxon>ant endosymbionts</taxon>
        <taxon>Candidatus Blochmanniella</taxon>
    </lineage>
</organism>
<proteinExistence type="inferred from homology"/>
<name>GPMA_BLOFL</name>
<feature type="chain" id="PRO_0000179861" description="2,3-bisphosphoglycerate-dependent phosphoglycerate mutase">
    <location>
        <begin position="1"/>
        <end position="232"/>
    </location>
</feature>
<feature type="active site" description="Tele-phosphohistidine intermediate" evidence="1">
    <location>
        <position position="11"/>
    </location>
</feature>
<feature type="active site" description="Proton donor/acceptor" evidence="1">
    <location>
        <position position="89"/>
    </location>
</feature>
<feature type="binding site" evidence="1">
    <location>
        <begin position="10"/>
        <end position="17"/>
    </location>
    <ligand>
        <name>substrate</name>
    </ligand>
</feature>
<feature type="binding site" evidence="1">
    <location>
        <begin position="23"/>
        <end position="24"/>
    </location>
    <ligand>
        <name>substrate</name>
    </ligand>
</feature>
<feature type="binding site" evidence="1">
    <location>
        <position position="62"/>
    </location>
    <ligand>
        <name>substrate</name>
    </ligand>
</feature>
<feature type="binding site" evidence="1">
    <location>
        <begin position="89"/>
        <end position="92"/>
    </location>
    <ligand>
        <name>substrate</name>
    </ligand>
</feature>
<feature type="binding site" evidence="1">
    <location>
        <position position="100"/>
    </location>
    <ligand>
        <name>substrate</name>
    </ligand>
</feature>
<feature type="binding site" evidence="1">
    <location>
        <begin position="116"/>
        <end position="117"/>
    </location>
    <ligand>
        <name>substrate</name>
    </ligand>
</feature>
<feature type="binding site" evidence="1">
    <location>
        <begin position="185"/>
        <end position="186"/>
    </location>
    <ligand>
        <name>substrate</name>
    </ligand>
</feature>
<feature type="site" description="Transition state stabilizer" evidence="1">
    <location>
        <position position="184"/>
    </location>
</feature>